<organism>
    <name type="scientific">Wolinella succinogenes (strain ATCC 29543 / DSM 1740 / CCUG 13145 / JCM 31913 / LMG 7466 / NCTC 11488 / FDC 602W)</name>
    <name type="common">Vibrio succinogenes</name>
    <dbReference type="NCBI Taxonomy" id="273121"/>
    <lineage>
        <taxon>Bacteria</taxon>
        <taxon>Pseudomonadati</taxon>
        <taxon>Campylobacterota</taxon>
        <taxon>Epsilonproteobacteria</taxon>
        <taxon>Campylobacterales</taxon>
        <taxon>Helicobacteraceae</taxon>
        <taxon>Wolinella</taxon>
    </lineage>
</organism>
<comment type="function">
    <text evidence="1">Catalyzes the reversible formation of acyl-phosphate (acyl-PO(4)) from acyl-[acyl-carrier-protein] (acyl-ACP). This enzyme utilizes acyl-ACP as fatty acyl donor, but not acyl-CoA.</text>
</comment>
<comment type="catalytic activity">
    <reaction evidence="1">
        <text>a fatty acyl-[ACP] + phosphate = an acyl phosphate + holo-[ACP]</text>
        <dbReference type="Rhea" id="RHEA:42292"/>
        <dbReference type="Rhea" id="RHEA-COMP:9685"/>
        <dbReference type="Rhea" id="RHEA-COMP:14125"/>
        <dbReference type="ChEBI" id="CHEBI:43474"/>
        <dbReference type="ChEBI" id="CHEBI:59918"/>
        <dbReference type="ChEBI" id="CHEBI:64479"/>
        <dbReference type="ChEBI" id="CHEBI:138651"/>
        <dbReference type="EC" id="2.3.1.274"/>
    </reaction>
</comment>
<comment type="pathway">
    <text evidence="1">Lipid metabolism; phospholipid metabolism.</text>
</comment>
<comment type="subunit">
    <text evidence="1">Homodimer. Probably interacts with PlsY.</text>
</comment>
<comment type="subcellular location">
    <subcellularLocation>
        <location evidence="1">Cytoplasm</location>
    </subcellularLocation>
    <text evidence="1">Associated with the membrane possibly through PlsY.</text>
</comment>
<comment type="similarity">
    <text evidence="1">Belongs to the PlsX family.</text>
</comment>
<keyword id="KW-0963">Cytoplasm</keyword>
<keyword id="KW-0444">Lipid biosynthesis</keyword>
<keyword id="KW-0443">Lipid metabolism</keyword>
<keyword id="KW-0594">Phospholipid biosynthesis</keyword>
<keyword id="KW-1208">Phospholipid metabolism</keyword>
<keyword id="KW-1185">Reference proteome</keyword>
<keyword id="KW-0808">Transferase</keyword>
<reference key="1">
    <citation type="journal article" date="2003" name="Proc. Natl. Acad. Sci. U.S.A.">
        <title>Complete genome sequence and analysis of Wolinella succinogenes.</title>
        <authorList>
            <person name="Baar C."/>
            <person name="Eppinger M."/>
            <person name="Raddatz G."/>
            <person name="Simon J."/>
            <person name="Lanz C."/>
            <person name="Klimmek O."/>
            <person name="Nandakumar R."/>
            <person name="Gross R."/>
            <person name="Rosinus A."/>
            <person name="Keller H."/>
            <person name="Jagtap P."/>
            <person name="Linke B."/>
            <person name="Meyer F."/>
            <person name="Lederer H."/>
            <person name="Schuster S.C."/>
        </authorList>
    </citation>
    <scope>NUCLEOTIDE SEQUENCE [LARGE SCALE GENOMIC DNA]</scope>
    <source>
        <strain>ATCC 29543 / DSM 1740 / CCUG 13145 / JCM 31913 / LMG 7466 / NCTC 11488 / FDC 602W</strain>
    </source>
</reference>
<gene>
    <name evidence="1" type="primary">plsX</name>
    <name type="ordered locus">WS1989</name>
</gene>
<name>PLSX_WOLSU</name>
<accession>Q7M7Z4</accession>
<dbReference type="EC" id="2.3.1.274" evidence="1"/>
<dbReference type="EMBL" id="BX571662">
    <property type="protein sequence ID" value="CAE10992.1"/>
    <property type="molecule type" value="Genomic_DNA"/>
</dbReference>
<dbReference type="RefSeq" id="WP_011139774.1">
    <property type="nucleotide sequence ID" value="NC_005090.1"/>
</dbReference>
<dbReference type="SMR" id="Q7M7Z4"/>
<dbReference type="STRING" id="273121.WS1989"/>
<dbReference type="KEGG" id="wsu:WS1989"/>
<dbReference type="eggNOG" id="COG0416">
    <property type="taxonomic scope" value="Bacteria"/>
</dbReference>
<dbReference type="HOGENOM" id="CLU_039379_1_1_7"/>
<dbReference type="UniPathway" id="UPA00085"/>
<dbReference type="Proteomes" id="UP000000422">
    <property type="component" value="Chromosome"/>
</dbReference>
<dbReference type="GO" id="GO:0005737">
    <property type="term" value="C:cytoplasm"/>
    <property type="evidence" value="ECO:0007669"/>
    <property type="project" value="UniProtKB-SubCell"/>
</dbReference>
<dbReference type="GO" id="GO:0043811">
    <property type="term" value="F:phosphate:acyl-[acyl carrier protein] acyltransferase activity"/>
    <property type="evidence" value="ECO:0007669"/>
    <property type="project" value="UniProtKB-UniRule"/>
</dbReference>
<dbReference type="GO" id="GO:0006633">
    <property type="term" value="P:fatty acid biosynthetic process"/>
    <property type="evidence" value="ECO:0007669"/>
    <property type="project" value="UniProtKB-UniRule"/>
</dbReference>
<dbReference type="GO" id="GO:0008654">
    <property type="term" value="P:phospholipid biosynthetic process"/>
    <property type="evidence" value="ECO:0007669"/>
    <property type="project" value="UniProtKB-KW"/>
</dbReference>
<dbReference type="Gene3D" id="3.40.718.10">
    <property type="entry name" value="Isopropylmalate Dehydrogenase"/>
    <property type="match status" value="1"/>
</dbReference>
<dbReference type="HAMAP" id="MF_00019">
    <property type="entry name" value="PlsX"/>
    <property type="match status" value="1"/>
</dbReference>
<dbReference type="InterPro" id="IPR003664">
    <property type="entry name" value="FA_synthesis"/>
</dbReference>
<dbReference type="InterPro" id="IPR012281">
    <property type="entry name" value="Phospholipid_synth_PlsX-like"/>
</dbReference>
<dbReference type="NCBIfam" id="TIGR00182">
    <property type="entry name" value="plsX"/>
    <property type="match status" value="1"/>
</dbReference>
<dbReference type="PANTHER" id="PTHR30100">
    <property type="entry name" value="FATTY ACID/PHOSPHOLIPID SYNTHESIS PROTEIN PLSX"/>
    <property type="match status" value="1"/>
</dbReference>
<dbReference type="PANTHER" id="PTHR30100:SF1">
    <property type="entry name" value="PHOSPHATE ACYLTRANSFERASE"/>
    <property type="match status" value="1"/>
</dbReference>
<dbReference type="Pfam" id="PF02504">
    <property type="entry name" value="FA_synthesis"/>
    <property type="match status" value="1"/>
</dbReference>
<dbReference type="PIRSF" id="PIRSF002465">
    <property type="entry name" value="Phsphlp_syn_PlsX"/>
    <property type="match status" value="1"/>
</dbReference>
<dbReference type="SUPFAM" id="SSF53659">
    <property type="entry name" value="Isocitrate/Isopropylmalate dehydrogenase-like"/>
    <property type="match status" value="1"/>
</dbReference>
<evidence type="ECO:0000255" key="1">
    <source>
        <dbReference type="HAMAP-Rule" id="MF_00019"/>
    </source>
</evidence>
<feature type="chain" id="PRO_0000189968" description="Phosphate acyltransferase">
    <location>
        <begin position="1"/>
        <end position="331"/>
    </location>
</feature>
<proteinExistence type="inferred from homology"/>
<protein>
    <recommendedName>
        <fullName evidence="1">Phosphate acyltransferase</fullName>
        <ecNumber evidence="1">2.3.1.274</ecNumber>
    </recommendedName>
    <alternativeName>
        <fullName evidence="1">Acyl-ACP phosphotransacylase</fullName>
    </alternativeName>
    <alternativeName>
        <fullName evidence="1">Acyl-[acyl-carrier-protein]--phosphate acyltransferase</fullName>
    </alternativeName>
    <alternativeName>
        <fullName evidence="1">Phosphate-acyl-ACP acyltransferase</fullName>
    </alternativeName>
</protein>
<sequence length="331" mass="35736">MVRVAIDAMGGDFGPAPIVEGTLLALNEKDFIPFLVGNKEIIEPLIPQKYKKTLEIIDCKDFIKMEEGASSAIRRKDSSIYVATELAKEGKVDALVSAGHSGATMSLATLRIGRIEGASRPAICAIMPRQDGKQSLILDAGANVDCKPEHLYEFALMGYEYSKNVMGYENPRIGLLSNGEEESKGNELTKSAFSRLKTLKGFVGNVEGHNIFDGSTEVIVCDGFVGNIVLKTSEGVAESITTLIKNFVKVSLTGVVGALFMKNVFKKLKKRMDYAEYGGAPLLGVNGNVIICHGKSNAKAIKNAIFQALTSVDQKINENIIKAFASHPSKE</sequence>